<dbReference type="EC" id="3.6.-.-" evidence="1"/>
<dbReference type="EMBL" id="AJ251564">
    <property type="protein sequence ID" value="CAB61255.1"/>
    <property type="molecule type" value="Genomic_DNA"/>
</dbReference>
<dbReference type="SMR" id="Q9RL97"/>
<dbReference type="GO" id="GO:0005829">
    <property type="term" value="C:cytosol"/>
    <property type="evidence" value="ECO:0007669"/>
    <property type="project" value="TreeGrafter"/>
</dbReference>
<dbReference type="GO" id="GO:0005525">
    <property type="term" value="F:GTP binding"/>
    <property type="evidence" value="ECO:0007669"/>
    <property type="project" value="UniProtKB-UniRule"/>
</dbReference>
<dbReference type="GO" id="GO:0003924">
    <property type="term" value="F:GTPase activity"/>
    <property type="evidence" value="ECO:0007669"/>
    <property type="project" value="UniProtKB-UniRule"/>
</dbReference>
<dbReference type="GO" id="GO:0046872">
    <property type="term" value="F:metal ion binding"/>
    <property type="evidence" value="ECO:0007669"/>
    <property type="project" value="UniProtKB-KW"/>
</dbReference>
<dbReference type="GO" id="GO:0030488">
    <property type="term" value="P:tRNA methylation"/>
    <property type="evidence" value="ECO:0007669"/>
    <property type="project" value="TreeGrafter"/>
</dbReference>
<dbReference type="GO" id="GO:0002098">
    <property type="term" value="P:tRNA wobble uridine modification"/>
    <property type="evidence" value="ECO:0007669"/>
    <property type="project" value="TreeGrafter"/>
</dbReference>
<dbReference type="CDD" id="cd04164">
    <property type="entry name" value="trmE"/>
    <property type="match status" value="1"/>
</dbReference>
<dbReference type="CDD" id="cd14858">
    <property type="entry name" value="TrmE_N"/>
    <property type="match status" value="1"/>
</dbReference>
<dbReference type="FunFam" id="3.30.1360.120:FF:000003">
    <property type="entry name" value="tRNA modification GTPase MnmE"/>
    <property type="match status" value="1"/>
</dbReference>
<dbReference type="FunFam" id="3.40.50.300:FF:000494">
    <property type="entry name" value="tRNA modification GTPase MnmE"/>
    <property type="match status" value="1"/>
</dbReference>
<dbReference type="Gene3D" id="3.40.50.300">
    <property type="entry name" value="P-loop containing nucleotide triphosphate hydrolases"/>
    <property type="match status" value="1"/>
</dbReference>
<dbReference type="Gene3D" id="3.30.1360.120">
    <property type="entry name" value="Probable tRNA modification gtpase trme, domain 1"/>
    <property type="match status" value="1"/>
</dbReference>
<dbReference type="Gene3D" id="1.20.120.430">
    <property type="entry name" value="tRNA modification GTPase MnmE domain 2"/>
    <property type="match status" value="1"/>
</dbReference>
<dbReference type="HAMAP" id="MF_00379">
    <property type="entry name" value="GTPase_MnmE"/>
    <property type="match status" value="1"/>
</dbReference>
<dbReference type="InterPro" id="IPR031168">
    <property type="entry name" value="G_TrmE"/>
</dbReference>
<dbReference type="InterPro" id="IPR006073">
    <property type="entry name" value="GTP-bd"/>
</dbReference>
<dbReference type="InterPro" id="IPR018948">
    <property type="entry name" value="GTP-bd_TrmE_N"/>
</dbReference>
<dbReference type="InterPro" id="IPR004520">
    <property type="entry name" value="GTPase_MnmE"/>
</dbReference>
<dbReference type="InterPro" id="IPR027368">
    <property type="entry name" value="MnmE_dom2"/>
</dbReference>
<dbReference type="InterPro" id="IPR025867">
    <property type="entry name" value="MnmE_helical"/>
</dbReference>
<dbReference type="InterPro" id="IPR027417">
    <property type="entry name" value="P-loop_NTPase"/>
</dbReference>
<dbReference type="InterPro" id="IPR005225">
    <property type="entry name" value="Small_GTP-bd"/>
</dbReference>
<dbReference type="InterPro" id="IPR027266">
    <property type="entry name" value="TrmE/GcvT_dom1"/>
</dbReference>
<dbReference type="NCBIfam" id="TIGR00450">
    <property type="entry name" value="mnmE_trmE_thdF"/>
    <property type="match status" value="1"/>
</dbReference>
<dbReference type="NCBIfam" id="TIGR00231">
    <property type="entry name" value="small_GTP"/>
    <property type="match status" value="1"/>
</dbReference>
<dbReference type="PANTHER" id="PTHR42714">
    <property type="entry name" value="TRNA MODIFICATION GTPASE GTPBP3"/>
    <property type="match status" value="1"/>
</dbReference>
<dbReference type="PANTHER" id="PTHR42714:SF2">
    <property type="entry name" value="TRNA MODIFICATION GTPASE GTPBP3, MITOCHONDRIAL"/>
    <property type="match status" value="1"/>
</dbReference>
<dbReference type="Pfam" id="PF01926">
    <property type="entry name" value="MMR_HSR1"/>
    <property type="match status" value="1"/>
</dbReference>
<dbReference type="Pfam" id="PF12631">
    <property type="entry name" value="MnmE_helical"/>
    <property type="match status" value="1"/>
</dbReference>
<dbReference type="Pfam" id="PF10396">
    <property type="entry name" value="TrmE_N"/>
    <property type="match status" value="1"/>
</dbReference>
<dbReference type="SUPFAM" id="SSF52540">
    <property type="entry name" value="P-loop containing nucleoside triphosphate hydrolases"/>
    <property type="match status" value="1"/>
</dbReference>
<dbReference type="SUPFAM" id="SSF116878">
    <property type="entry name" value="TrmE connector domain"/>
    <property type="match status" value="1"/>
</dbReference>
<dbReference type="PROSITE" id="PS51709">
    <property type="entry name" value="G_TRME"/>
    <property type="match status" value="1"/>
</dbReference>
<comment type="function">
    <text evidence="1">Exhibits a very high intrinsic GTPase hydrolysis rate. Involved in the addition of a carboxymethylaminomethyl (cmnm) group at the wobble position (U34) of certain tRNAs, forming tRNA-cmnm(5)s(2)U34.</text>
</comment>
<comment type="cofactor">
    <cofactor evidence="1">
        <name>K(+)</name>
        <dbReference type="ChEBI" id="CHEBI:29103"/>
    </cofactor>
    <text evidence="1">Binds 1 potassium ion per subunit.</text>
</comment>
<comment type="subunit">
    <text evidence="1">Homodimer. Heterotetramer of two MnmE and two MnmG subunits.</text>
</comment>
<comment type="subcellular location">
    <subcellularLocation>
        <location evidence="1">Cytoplasm</location>
    </subcellularLocation>
</comment>
<comment type="similarity">
    <text evidence="1">Belongs to the TRAFAC class TrmE-Era-EngA-EngB-Septin-like GTPase superfamily. TrmE GTPase family.</text>
</comment>
<protein>
    <recommendedName>
        <fullName evidence="1">tRNA modification GTPase MnmE</fullName>
        <ecNumber evidence="1">3.6.-.-</ecNumber>
    </recommendedName>
</protein>
<proteinExistence type="inferred from homology"/>
<organism>
    <name type="scientific">Streptococcus agalactiae</name>
    <dbReference type="NCBI Taxonomy" id="1311"/>
    <lineage>
        <taxon>Bacteria</taxon>
        <taxon>Bacillati</taxon>
        <taxon>Bacillota</taxon>
        <taxon>Bacilli</taxon>
        <taxon>Lactobacillales</taxon>
        <taxon>Streptococcaceae</taxon>
        <taxon>Streptococcus</taxon>
    </lineage>
</organism>
<keyword id="KW-0963">Cytoplasm</keyword>
<keyword id="KW-0342">GTP-binding</keyword>
<keyword id="KW-0378">Hydrolase</keyword>
<keyword id="KW-0460">Magnesium</keyword>
<keyword id="KW-0479">Metal-binding</keyword>
<keyword id="KW-0547">Nucleotide-binding</keyword>
<keyword id="KW-0630">Potassium</keyword>
<keyword id="KW-0819">tRNA processing</keyword>
<gene>
    <name evidence="1" type="primary">mnmE</name>
    <name evidence="1" type="synonym">thdF</name>
    <name evidence="1" type="synonym">trmE</name>
</gene>
<reference key="1">
    <citation type="submission" date="1999-11" db="EMBL/GenBank/DDBJ databases">
        <authorList>
            <person name="Kung C.P."/>
            <person name="Chang H.Y."/>
            <person name="Peng H.L."/>
        </authorList>
    </citation>
    <scope>NUCLEOTIDE SEQUENCE [GENOMIC DNA]</scope>
</reference>
<feature type="chain" id="PRO_0000188925" description="tRNA modification GTPase MnmE">
    <location>
        <begin position="1"/>
        <end position="462"/>
    </location>
</feature>
<feature type="domain" description="TrmE-type G">
    <location>
        <begin position="228"/>
        <end position="382"/>
    </location>
</feature>
<feature type="binding site" evidence="1">
    <location>
        <position position="26"/>
    </location>
    <ligand>
        <name>(6S)-5-formyl-5,6,7,8-tetrahydrofolate</name>
        <dbReference type="ChEBI" id="CHEBI:57457"/>
    </ligand>
</feature>
<feature type="binding site" evidence="1">
    <location>
        <position position="91"/>
    </location>
    <ligand>
        <name>(6S)-5-formyl-5,6,7,8-tetrahydrofolate</name>
        <dbReference type="ChEBI" id="CHEBI:57457"/>
    </ligand>
</feature>
<feature type="binding site" evidence="1">
    <location>
        <position position="130"/>
    </location>
    <ligand>
        <name>(6S)-5-formyl-5,6,7,8-tetrahydrofolate</name>
        <dbReference type="ChEBI" id="CHEBI:57457"/>
    </ligand>
</feature>
<feature type="binding site" evidence="1">
    <location>
        <begin position="238"/>
        <end position="243"/>
    </location>
    <ligand>
        <name>GTP</name>
        <dbReference type="ChEBI" id="CHEBI:37565"/>
    </ligand>
</feature>
<feature type="binding site" evidence="1">
    <location>
        <position position="238"/>
    </location>
    <ligand>
        <name>K(+)</name>
        <dbReference type="ChEBI" id="CHEBI:29103"/>
    </ligand>
</feature>
<feature type="binding site" evidence="1">
    <location>
        <position position="242"/>
    </location>
    <ligand>
        <name>Mg(2+)</name>
        <dbReference type="ChEBI" id="CHEBI:18420"/>
    </ligand>
</feature>
<feature type="binding site" evidence="1">
    <location>
        <begin position="257"/>
        <end position="263"/>
    </location>
    <ligand>
        <name>GTP</name>
        <dbReference type="ChEBI" id="CHEBI:37565"/>
    </ligand>
</feature>
<feature type="binding site" evidence="1">
    <location>
        <position position="257"/>
    </location>
    <ligand>
        <name>K(+)</name>
        <dbReference type="ChEBI" id="CHEBI:29103"/>
    </ligand>
</feature>
<feature type="binding site" evidence="1">
    <location>
        <position position="259"/>
    </location>
    <ligand>
        <name>K(+)</name>
        <dbReference type="ChEBI" id="CHEBI:29103"/>
    </ligand>
</feature>
<feature type="binding site" evidence="1">
    <location>
        <position position="262"/>
    </location>
    <ligand>
        <name>K(+)</name>
        <dbReference type="ChEBI" id="CHEBI:29103"/>
    </ligand>
</feature>
<feature type="binding site" evidence="1">
    <location>
        <position position="263"/>
    </location>
    <ligand>
        <name>Mg(2+)</name>
        <dbReference type="ChEBI" id="CHEBI:18420"/>
    </ligand>
</feature>
<feature type="binding site" evidence="1">
    <location>
        <begin position="282"/>
        <end position="285"/>
    </location>
    <ligand>
        <name>GTP</name>
        <dbReference type="ChEBI" id="CHEBI:37565"/>
    </ligand>
</feature>
<feature type="binding site" evidence="1">
    <location>
        <position position="462"/>
    </location>
    <ligand>
        <name>(6S)-5-formyl-5,6,7,8-tetrahydrofolate</name>
        <dbReference type="ChEBI" id="CHEBI:57457"/>
    </ligand>
</feature>
<sequence length="462" mass="51535">MSITKEFDTIAAISTPLGEGAIGIVRISGTDALKIASKIYRGLRGKDLSAIQSHTLNYGHIVDPDKNEILDEVMLGVMLAPKTFTREDVIEINTHGGIAVTNEILQLILATMDHNAEPGEFTKRAFLNGRVDLTQAEAVMDLIRAKTIKQWIYVSLKQLDGSLKTLINNTRQEILNTLAQVEVNIDYPEYDDVEEMTTTLMREKTQEFQALMENLLRTARRGKILREGLSTAKIGRPNVGKSQLLNNLLREEKAIVTDIEGTTRDVIEEYVNIKGVPLKLVDTAGIRDTDDIVEKIGVERSKKALEEADLVLLVLNSSEPLTLQDRSLLELSKESNRIVLLNKTDLPQKIEVNELPENVIPISVLENENIDKIEERINDIFFDNAGMVEHDATYLSNARHISLIEKAVDSLKAVNEGLELGMPVDLLQVDMTRTWEILGEITGDAAPDELITQLFSQFCLGK</sequence>
<name>MNME_STRAG</name>
<accession>Q9RL97</accession>
<evidence type="ECO:0000255" key="1">
    <source>
        <dbReference type="HAMAP-Rule" id="MF_00379"/>
    </source>
</evidence>